<sequence>MAQDQGEKENPMRELRIRKLCLNICVGESGDRLTRAAKVLEQLTGQTPVFSKARYTVRSFGIRRNEKIAVHCTVRGAKAEEILEKGLKVREYELRKNNFSDTGNFGFGIQEHIDLGIKYDPSIGIYGLDFYVVLGRPGFSIADKKRRTGCIGAKHRISKEEAMRWFQQKYDGIILPGK</sequence>
<proteinExistence type="evidence at protein level"/>
<evidence type="ECO:0000250" key="1">
    <source>
        <dbReference type="UniProtKB" id="P62913"/>
    </source>
</evidence>
<evidence type="ECO:0000250" key="2">
    <source>
        <dbReference type="UniProtKB" id="Q9CXW4"/>
    </source>
</evidence>
<evidence type="ECO:0000269" key="3">
    <source>
    </source>
</evidence>
<evidence type="ECO:0000269" key="4">
    <source ref="2"/>
</evidence>
<evidence type="ECO:0000305" key="5"/>
<feature type="initiator methionine" description="Removed" evidence="3 4">
    <location>
        <position position="1"/>
    </location>
</feature>
<feature type="chain" id="PRO_0000125085" description="Large ribosomal subunit protein uL5">
    <location>
        <begin position="2"/>
        <end position="178"/>
    </location>
</feature>
<feature type="modified residue" description="N-acetylalanine" evidence="3 4">
    <location>
        <position position="2"/>
    </location>
</feature>
<feature type="modified residue" description="Phosphothreonine" evidence="1">
    <location>
        <position position="44"/>
    </location>
</feature>
<feature type="modified residue" description="Phosphothreonine" evidence="1">
    <location>
        <position position="47"/>
    </location>
</feature>
<feature type="modified residue" description="N6-acetyllysine; alternate" evidence="1">
    <location>
        <position position="52"/>
    </location>
</feature>
<feature type="modified residue" description="N6-acetyllysine" evidence="1">
    <location>
        <position position="85"/>
    </location>
</feature>
<feature type="cross-link" description="Glycyl lysine isopeptide (Lys-Gly) (interchain with G-Cter in SUMO2)" evidence="1">
    <location>
        <position position="38"/>
    </location>
</feature>
<feature type="cross-link" description="Glycyl lysine isopeptide (Lys-Gly) (interchain with G-Cter in SUMO2); alternate" evidence="1">
    <location>
        <position position="52"/>
    </location>
</feature>
<feature type="cross-link" description="Glycyl lysine isopeptide (Lys-Gly) (interchain with G-Cter in SUMO2)" evidence="1">
    <location>
        <position position="154"/>
    </location>
</feature>
<reference key="1">
    <citation type="journal article" date="1992" name="Biochem. Biophys. Res. Commun.">
        <title>The primary structure of rat ribosomal protein L11.</title>
        <authorList>
            <person name="Chan Y.-L."/>
            <person name="Olvera J."/>
            <person name="Paz V."/>
            <person name="Wool I.G."/>
        </authorList>
    </citation>
    <scope>NUCLEOTIDE SEQUENCE [MRNA]</scope>
    <scope>PARTIAL PROTEIN SEQUENCE</scope>
    <scope>CLEAVAGE OF INITIATOR METHIONINE</scope>
    <scope>ACETYLATION AT ALA-2</scope>
    <source>
        <strain>Sprague-Dawley</strain>
        <tissue>Liver</tissue>
    </source>
</reference>
<reference key="2">
    <citation type="submission" date="2009-06" db="UniProtKB">
        <authorList>
            <person name="Bienvenut W.V."/>
            <person name="von Kriegsheim A."/>
            <person name="Kolch W."/>
        </authorList>
    </citation>
    <scope>PROTEIN SEQUENCE OF 2-13; 39-52 AND 170-178</scope>
    <scope>CLEAVAGE OF INITIATOR METHIONINE</scope>
    <scope>ACETYLATION AT ALA-2</scope>
    <scope>IDENTIFICATION BY MASS SPECTROMETRY</scope>
    <source>
        <tissue>Fibroblast</tissue>
    </source>
</reference>
<name>RL11_RAT</name>
<organism>
    <name type="scientific">Rattus norvegicus</name>
    <name type="common">Rat</name>
    <dbReference type="NCBI Taxonomy" id="10116"/>
    <lineage>
        <taxon>Eukaryota</taxon>
        <taxon>Metazoa</taxon>
        <taxon>Chordata</taxon>
        <taxon>Craniata</taxon>
        <taxon>Vertebrata</taxon>
        <taxon>Euteleostomi</taxon>
        <taxon>Mammalia</taxon>
        <taxon>Eutheria</taxon>
        <taxon>Euarchontoglires</taxon>
        <taxon>Glires</taxon>
        <taxon>Rodentia</taxon>
        <taxon>Myomorpha</taxon>
        <taxon>Muroidea</taxon>
        <taxon>Muridae</taxon>
        <taxon>Murinae</taxon>
        <taxon>Rattus</taxon>
    </lineage>
</organism>
<comment type="function">
    <text evidence="1">Component of the ribosome, a large ribonucleoprotein complex responsible for the synthesis of proteins in the cell. The small ribosomal subunit (SSU) binds messenger RNAs (mRNAs) and translates the encoded message by selecting cognate aminoacyl-transfer RNA (tRNA) molecules. The large subunit (LSU) contains the ribosomal catalytic site termed the peptidyl transferase center (PTC), which catalyzes the formation of peptide bonds, thereby polymerizing the amino acids delivered by tRNAs into a polypeptide chain. The nascent polypeptides leave the ribosome through a tunnel in the LSU and interact with protein factors that function in enzymatic processing, targeting, and the membrane insertion of nascent chains at the exit of the ribosomal tunnel. As part of the 5S RNP/5S ribonucleoprotein particle it is an essential component of the LSU, required for its formation and the maturation of rRNAs. It also couples ribosome biogenesis to p53/TP53 activation. As part of the 5S RNP it accumulates in the nucleoplasm and inhibits MDM2, when ribosome biogenesis is perturbed, mediating the stabilization and the activation of TP53. Promotes nucleolar location of PML.</text>
</comment>
<comment type="subunit">
    <text evidence="1 2">Component of the large ribosomal subunit (LSU) (By similarity). Part of the 5S RNP complex, which is a LSU subcomplex composed of the 5S RNA, RPL5 and RPL11 (By similarity). Component of a hexameric 5S RNP precursor complex, composed of 5S RNA, RRS1, RPF2/BXDC1, RPL5, RPL11 and HEATR3; this complex acts as a precursor for ribosome assembly (By similarity). Interacts with PML (By similarity). Interacts with MDM2 (via its RanBP2-type zinc finger domain); negatively regulates MDM2-mediated TP53 ubiquitination and degradation (By similarity). Interacts with NOP53; retains RPL11 into the nucleolus (By similarity).</text>
</comment>
<comment type="subcellular location">
    <subcellularLocation>
        <location evidence="2">Nucleus</location>
        <location evidence="2">Nucleolus</location>
    </subcellularLocation>
    <subcellularLocation>
        <location evidence="2">Cytoplasm</location>
    </subcellularLocation>
</comment>
<comment type="similarity">
    <text evidence="5">Belongs to the universal ribosomal protein uL5 family.</text>
</comment>
<dbReference type="EMBL" id="X62146">
    <property type="protein sequence ID" value="CAA44072.1"/>
    <property type="molecule type" value="mRNA"/>
</dbReference>
<dbReference type="PIR" id="JT0606">
    <property type="entry name" value="R5RT11"/>
</dbReference>
<dbReference type="RefSeq" id="XP_006239286.1">
    <property type="nucleotide sequence ID" value="XM_006239224.5"/>
</dbReference>
<dbReference type="PDB" id="7QGG">
    <property type="method" value="EM"/>
    <property type="resolution" value="2.86 A"/>
    <property type="chains" value="L=1-178"/>
</dbReference>
<dbReference type="PDBsum" id="7QGG"/>
<dbReference type="EMDB" id="EMD-13954"/>
<dbReference type="SMR" id="P62914"/>
<dbReference type="BioGRID" id="263597">
    <property type="interactions" value="7"/>
</dbReference>
<dbReference type="FunCoup" id="P62914">
    <property type="interactions" value="2025"/>
</dbReference>
<dbReference type="IntAct" id="P62914">
    <property type="interactions" value="5"/>
</dbReference>
<dbReference type="MINT" id="P62914"/>
<dbReference type="STRING" id="10116.ENSRNOP00000072829"/>
<dbReference type="iPTMnet" id="P62914"/>
<dbReference type="PhosphoSitePlus" id="P62914"/>
<dbReference type="jPOST" id="P62914"/>
<dbReference type="PaxDb" id="10116-ENSRNOP00000037110"/>
<dbReference type="GeneID" id="362631"/>
<dbReference type="UCSC" id="RGD:1308681">
    <property type="organism name" value="rat"/>
</dbReference>
<dbReference type="AGR" id="RGD:1308681"/>
<dbReference type="CTD" id="6135"/>
<dbReference type="RGD" id="1308681">
    <property type="gene designation" value="Rpl11"/>
</dbReference>
<dbReference type="VEuPathDB" id="HostDB:ENSRNOG00000026260"/>
<dbReference type="eggNOG" id="KOG0397">
    <property type="taxonomic scope" value="Eukaryota"/>
</dbReference>
<dbReference type="InParanoid" id="P62914"/>
<dbReference type="OrthoDB" id="5530at9989"/>
<dbReference type="PhylomeDB" id="P62914"/>
<dbReference type="TreeFam" id="TF300017"/>
<dbReference type="Reactome" id="R-RNO-156827">
    <property type="pathway name" value="L13a-mediated translational silencing of Ceruloplasmin expression"/>
</dbReference>
<dbReference type="Reactome" id="R-RNO-1799339">
    <property type="pathway name" value="SRP-dependent cotranslational protein targeting to membrane"/>
</dbReference>
<dbReference type="Reactome" id="R-RNO-6791226">
    <property type="pathway name" value="Major pathway of rRNA processing in the nucleolus and cytosol"/>
</dbReference>
<dbReference type="Reactome" id="R-RNO-72689">
    <property type="pathway name" value="Formation of a pool of free 40S subunits"/>
</dbReference>
<dbReference type="Reactome" id="R-RNO-72706">
    <property type="pathway name" value="GTP hydrolysis and joining of the 60S ribosomal subunit"/>
</dbReference>
<dbReference type="Reactome" id="R-RNO-975956">
    <property type="pathway name" value="Nonsense Mediated Decay (NMD) independent of the Exon Junction Complex (EJC)"/>
</dbReference>
<dbReference type="Reactome" id="R-RNO-975957">
    <property type="pathway name" value="Nonsense Mediated Decay (NMD) enhanced by the Exon Junction Complex (EJC)"/>
</dbReference>
<dbReference type="PRO" id="PR:P62914"/>
<dbReference type="Proteomes" id="UP000002494">
    <property type="component" value="Chromosome 5"/>
</dbReference>
<dbReference type="Bgee" id="ENSRNOG00000026260">
    <property type="expression patterns" value="Expressed in thymus and 20 other cell types or tissues"/>
</dbReference>
<dbReference type="ExpressionAtlas" id="P62914">
    <property type="expression patterns" value="baseline and differential"/>
</dbReference>
<dbReference type="GO" id="GO:0005737">
    <property type="term" value="C:cytoplasm"/>
    <property type="evidence" value="ECO:0000266"/>
    <property type="project" value="RGD"/>
</dbReference>
<dbReference type="GO" id="GO:0098556">
    <property type="term" value="C:cytoplasmic side of rough endoplasmic reticulum membrane"/>
    <property type="evidence" value="ECO:0000266"/>
    <property type="project" value="RGD"/>
</dbReference>
<dbReference type="GO" id="GO:0022625">
    <property type="term" value="C:cytosolic large ribosomal subunit"/>
    <property type="evidence" value="ECO:0000314"/>
    <property type="project" value="RGD"/>
</dbReference>
<dbReference type="GO" id="GO:0022626">
    <property type="term" value="C:cytosolic ribosome"/>
    <property type="evidence" value="ECO:0000314"/>
    <property type="project" value="RGD"/>
</dbReference>
<dbReference type="GO" id="GO:0015934">
    <property type="term" value="C:large ribosomal subunit"/>
    <property type="evidence" value="ECO:0000266"/>
    <property type="project" value="RGD"/>
</dbReference>
<dbReference type="GO" id="GO:0005730">
    <property type="term" value="C:nucleolus"/>
    <property type="evidence" value="ECO:0000250"/>
    <property type="project" value="UniProtKB"/>
</dbReference>
<dbReference type="GO" id="GO:0005654">
    <property type="term" value="C:nucleoplasm"/>
    <property type="evidence" value="ECO:0000250"/>
    <property type="project" value="UniProtKB"/>
</dbReference>
<dbReference type="GO" id="GO:0098794">
    <property type="term" value="C:postsynapse"/>
    <property type="evidence" value="ECO:0000303"/>
    <property type="project" value="SynGO"/>
</dbReference>
<dbReference type="GO" id="GO:0098793">
    <property type="term" value="C:presynapse"/>
    <property type="evidence" value="ECO:0000303"/>
    <property type="project" value="SynGO"/>
</dbReference>
<dbReference type="GO" id="GO:0032991">
    <property type="term" value="C:protein-containing complex"/>
    <property type="evidence" value="ECO:0000266"/>
    <property type="project" value="RGD"/>
</dbReference>
<dbReference type="GO" id="GO:0005840">
    <property type="term" value="C:ribosome"/>
    <property type="evidence" value="ECO:0000303"/>
    <property type="project" value="SynGO"/>
</dbReference>
<dbReference type="GO" id="GO:0045202">
    <property type="term" value="C:synapse"/>
    <property type="evidence" value="ECO:0000314"/>
    <property type="project" value="SynGO"/>
</dbReference>
<dbReference type="GO" id="GO:0008097">
    <property type="term" value="F:5S rRNA binding"/>
    <property type="evidence" value="ECO:0000266"/>
    <property type="project" value="RGD"/>
</dbReference>
<dbReference type="GO" id="GO:0042975">
    <property type="term" value="F:peroxisome proliferator activated receptor binding"/>
    <property type="evidence" value="ECO:0000353"/>
    <property type="project" value="RGD"/>
</dbReference>
<dbReference type="GO" id="GO:0003723">
    <property type="term" value="F:RNA binding"/>
    <property type="evidence" value="ECO:0000318"/>
    <property type="project" value="GO_Central"/>
</dbReference>
<dbReference type="GO" id="GO:0003735">
    <property type="term" value="F:structural constituent of ribosome"/>
    <property type="evidence" value="ECO:0000266"/>
    <property type="project" value="RGD"/>
</dbReference>
<dbReference type="GO" id="GO:1990948">
    <property type="term" value="F:ubiquitin ligase inhibitor activity"/>
    <property type="evidence" value="ECO:0000266"/>
    <property type="project" value="RGD"/>
</dbReference>
<dbReference type="GO" id="GO:0031625">
    <property type="term" value="F:ubiquitin protein ligase binding"/>
    <property type="evidence" value="ECO:0000266"/>
    <property type="project" value="RGD"/>
</dbReference>
<dbReference type="GO" id="GO:0002181">
    <property type="term" value="P:cytoplasmic translation"/>
    <property type="evidence" value="ECO:0000266"/>
    <property type="project" value="RGD"/>
</dbReference>
<dbReference type="GO" id="GO:0032435">
    <property type="term" value="P:negative regulation of proteasomal ubiquitin-dependent protein catabolic process"/>
    <property type="evidence" value="ECO:0000250"/>
    <property type="project" value="UniProtKB"/>
</dbReference>
<dbReference type="GO" id="GO:2000435">
    <property type="term" value="P:negative regulation of protein neddylation"/>
    <property type="evidence" value="ECO:0000266"/>
    <property type="project" value="RGD"/>
</dbReference>
<dbReference type="GO" id="GO:2000059">
    <property type="term" value="P:negative regulation of ubiquitin-dependent protein catabolic process"/>
    <property type="evidence" value="ECO:0000266"/>
    <property type="project" value="RGD"/>
</dbReference>
<dbReference type="GO" id="GO:0010628">
    <property type="term" value="P:positive regulation of gene expression"/>
    <property type="evidence" value="ECO:0000266"/>
    <property type="project" value="RGD"/>
</dbReference>
<dbReference type="GO" id="GO:1901798">
    <property type="term" value="P:positive regulation of signal transduction by p53 class mediator"/>
    <property type="evidence" value="ECO:0000250"/>
    <property type="project" value="UniProtKB"/>
</dbReference>
<dbReference type="GO" id="GO:0034504">
    <property type="term" value="P:protein localization to nucleus"/>
    <property type="evidence" value="ECO:0000250"/>
    <property type="project" value="UniProtKB"/>
</dbReference>
<dbReference type="GO" id="GO:0050821">
    <property type="term" value="P:protein stabilization"/>
    <property type="evidence" value="ECO:0000266"/>
    <property type="project" value="RGD"/>
</dbReference>
<dbReference type="GO" id="GO:0006605">
    <property type="term" value="P:protein targeting"/>
    <property type="evidence" value="ECO:0000266"/>
    <property type="project" value="RGD"/>
</dbReference>
<dbReference type="GO" id="GO:1901796">
    <property type="term" value="P:regulation of signal transduction by p53 class mediator"/>
    <property type="evidence" value="ECO:0000266"/>
    <property type="project" value="RGD"/>
</dbReference>
<dbReference type="GO" id="GO:0000027">
    <property type="term" value="P:ribosomal large subunit assembly"/>
    <property type="evidence" value="ECO:0000266"/>
    <property type="project" value="RGD"/>
</dbReference>
<dbReference type="GO" id="GO:0042273">
    <property type="term" value="P:ribosomal large subunit biogenesis"/>
    <property type="evidence" value="ECO:0000266"/>
    <property type="project" value="RGD"/>
</dbReference>
<dbReference type="GO" id="GO:0006364">
    <property type="term" value="P:rRNA processing"/>
    <property type="evidence" value="ECO:0000266"/>
    <property type="project" value="RGD"/>
</dbReference>
<dbReference type="GO" id="GO:0006412">
    <property type="term" value="P:translation"/>
    <property type="evidence" value="ECO:0000318"/>
    <property type="project" value="GO_Central"/>
</dbReference>
<dbReference type="GO" id="GO:0140242">
    <property type="term" value="P:translation at postsynapse"/>
    <property type="evidence" value="ECO:0000303"/>
    <property type="project" value="SynGO"/>
</dbReference>
<dbReference type="GO" id="GO:0140236">
    <property type="term" value="P:translation at presynapse"/>
    <property type="evidence" value="ECO:0000303"/>
    <property type="project" value="SynGO"/>
</dbReference>
<dbReference type="FunFam" id="3.30.1440.10:FF:000002">
    <property type="entry name" value="60S ribosomal protein L11"/>
    <property type="match status" value="1"/>
</dbReference>
<dbReference type="Gene3D" id="3.30.1440.10">
    <property type="match status" value="1"/>
</dbReference>
<dbReference type="InterPro" id="IPR002132">
    <property type="entry name" value="Ribosomal_uL5"/>
</dbReference>
<dbReference type="InterPro" id="IPR031309">
    <property type="entry name" value="Ribosomal_uL5_C"/>
</dbReference>
<dbReference type="InterPro" id="IPR020929">
    <property type="entry name" value="Ribosomal_uL5_CS"/>
</dbReference>
<dbReference type="InterPro" id="IPR022803">
    <property type="entry name" value="Ribosomal_uL5_dom_sf"/>
</dbReference>
<dbReference type="InterPro" id="IPR031310">
    <property type="entry name" value="Ribosomal_uL5_N"/>
</dbReference>
<dbReference type="NCBIfam" id="NF003258">
    <property type="entry name" value="PRK04219.1"/>
    <property type="match status" value="1"/>
</dbReference>
<dbReference type="PANTHER" id="PTHR11994">
    <property type="entry name" value="60S RIBOSOMAL PROTEIN L11-RELATED"/>
    <property type="match status" value="1"/>
</dbReference>
<dbReference type="Pfam" id="PF00281">
    <property type="entry name" value="Ribosomal_L5"/>
    <property type="match status" value="1"/>
</dbReference>
<dbReference type="Pfam" id="PF00673">
    <property type="entry name" value="Ribosomal_L5_C"/>
    <property type="match status" value="1"/>
</dbReference>
<dbReference type="PIRSF" id="PIRSF002161">
    <property type="entry name" value="Ribosomal_L5"/>
    <property type="match status" value="1"/>
</dbReference>
<dbReference type="SUPFAM" id="SSF55282">
    <property type="entry name" value="RL5-like"/>
    <property type="match status" value="1"/>
</dbReference>
<dbReference type="PROSITE" id="PS00358">
    <property type="entry name" value="RIBOSOMAL_L5"/>
    <property type="match status" value="1"/>
</dbReference>
<protein>
    <recommendedName>
        <fullName evidence="5">Large ribosomal subunit protein uL5</fullName>
    </recommendedName>
    <alternativeName>
        <fullName>60S ribosomal protein L11</fullName>
    </alternativeName>
</protein>
<gene>
    <name type="primary">Rpl11</name>
</gene>
<accession>P62914</accession>
<accession>P25121</accession>
<accession>P39026</accession>
<accession>Q9Y674</accession>
<keyword id="KW-0002">3D-structure</keyword>
<keyword id="KW-0007">Acetylation</keyword>
<keyword id="KW-0963">Cytoplasm</keyword>
<keyword id="KW-0903">Direct protein sequencing</keyword>
<keyword id="KW-1017">Isopeptide bond</keyword>
<keyword id="KW-0539">Nucleus</keyword>
<keyword id="KW-0597">Phosphoprotein</keyword>
<keyword id="KW-1185">Reference proteome</keyword>
<keyword id="KW-0687">Ribonucleoprotein</keyword>
<keyword id="KW-0689">Ribosomal protein</keyword>
<keyword id="KW-0694">RNA-binding</keyword>
<keyword id="KW-0699">rRNA-binding</keyword>
<keyword id="KW-0832">Ubl conjugation</keyword>